<keyword id="KW-0067">ATP-binding</keyword>
<keyword id="KW-0418">Kinase</keyword>
<keyword id="KW-0545">Nucleotide biosynthesis</keyword>
<keyword id="KW-0547">Nucleotide-binding</keyword>
<keyword id="KW-0808">Transferase</keyword>
<sequence>MKQAKFIVIEGLEGAGKSTAIQTVLDTLRQAGINEIAQTREPGGTPLAEKMRALVKEEHPGEHLHDMTELLLLYAARVQLVENVIKPALHEGKWVVGDRHDLSSQAYQGGGRQIDATLMKNLRDTALGEFKPAFTLYMDIDPKVGLERARGRGELDRIEKMDISFFERTRQRYLELAKSDASIVTINAEQSIEQVANDIRSALNLWLEQLQD</sequence>
<proteinExistence type="inferred from homology"/>
<accession>Q7MLZ6</accession>
<name>KTHY_VIBVY</name>
<comment type="function">
    <text evidence="1">Phosphorylation of dTMP to form dTDP in both de novo and salvage pathways of dTTP synthesis.</text>
</comment>
<comment type="catalytic activity">
    <reaction evidence="1">
        <text>dTMP + ATP = dTDP + ADP</text>
        <dbReference type="Rhea" id="RHEA:13517"/>
        <dbReference type="ChEBI" id="CHEBI:30616"/>
        <dbReference type="ChEBI" id="CHEBI:58369"/>
        <dbReference type="ChEBI" id="CHEBI:63528"/>
        <dbReference type="ChEBI" id="CHEBI:456216"/>
        <dbReference type="EC" id="2.7.4.9"/>
    </reaction>
</comment>
<comment type="similarity">
    <text evidence="1">Belongs to the thymidylate kinase family.</text>
</comment>
<protein>
    <recommendedName>
        <fullName evidence="1">Thymidylate kinase</fullName>
        <ecNumber evidence="1">2.7.4.9</ecNumber>
    </recommendedName>
    <alternativeName>
        <fullName evidence="1">dTMP kinase</fullName>
    </alternativeName>
</protein>
<gene>
    <name evidence="1" type="primary">tmk</name>
    <name type="ordered locus">VV1280</name>
</gene>
<reference key="1">
    <citation type="journal article" date="2003" name="Genome Res.">
        <title>Comparative genome analysis of Vibrio vulnificus, a marine pathogen.</title>
        <authorList>
            <person name="Chen C.-Y."/>
            <person name="Wu K.-M."/>
            <person name="Chang Y.-C."/>
            <person name="Chang C.-H."/>
            <person name="Tsai H.-C."/>
            <person name="Liao T.-L."/>
            <person name="Liu Y.-M."/>
            <person name="Chen H.-J."/>
            <person name="Shen A.B.-T."/>
            <person name="Li J.-C."/>
            <person name="Su T.-L."/>
            <person name="Shao C.-P."/>
            <person name="Lee C.-T."/>
            <person name="Hor L.-I."/>
            <person name="Tsai S.-F."/>
        </authorList>
    </citation>
    <scope>NUCLEOTIDE SEQUENCE [LARGE SCALE GENOMIC DNA]</scope>
    <source>
        <strain>YJ016</strain>
    </source>
</reference>
<dbReference type="EC" id="2.7.4.9" evidence="1"/>
<dbReference type="EMBL" id="BA000037">
    <property type="protein sequence ID" value="BAC94044.1"/>
    <property type="molecule type" value="Genomic_DNA"/>
</dbReference>
<dbReference type="RefSeq" id="WP_011080814.1">
    <property type="nucleotide sequence ID" value="NC_005139.1"/>
</dbReference>
<dbReference type="SMR" id="Q7MLZ6"/>
<dbReference type="STRING" id="672.VV93_v1c11970"/>
<dbReference type="KEGG" id="vvy:VV1280"/>
<dbReference type="PATRIC" id="fig|196600.6.peg.1272"/>
<dbReference type="eggNOG" id="COG0125">
    <property type="taxonomic scope" value="Bacteria"/>
</dbReference>
<dbReference type="HOGENOM" id="CLU_049131_0_1_6"/>
<dbReference type="Proteomes" id="UP000002675">
    <property type="component" value="Chromosome I"/>
</dbReference>
<dbReference type="GO" id="GO:0005829">
    <property type="term" value="C:cytosol"/>
    <property type="evidence" value="ECO:0007669"/>
    <property type="project" value="TreeGrafter"/>
</dbReference>
<dbReference type="GO" id="GO:0005524">
    <property type="term" value="F:ATP binding"/>
    <property type="evidence" value="ECO:0007669"/>
    <property type="project" value="UniProtKB-UniRule"/>
</dbReference>
<dbReference type="GO" id="GO:0004798">
    <property type="term" value="F:dTMP kinase activity"/>
    <property type="evidence" value="ECO:0007669"/>
    <property type="project" value="UniProtKB-UniRule"/>
</dbReference>
<dbReference type="GO" id="GO:0006233">
    <property type="term" value="P:dTDP biosynthetic process"/>
    <property type="evidence" value="ECO:0007669"/>
    <property type="project" value="InterPro"/>
</dbReference>
<dbReference type="GO" id="GO:0006235">
    <property type="term" value="P:dTTP biosynthetic process"/>
    <property type="evidence" value="ECO:0007669"/>
    <property type="project" value="UniProtKB-UniRule"/>
</dbReference>
<dbReference type="GO" id="GO:0006227">
    <property type="term" value="P:dUDP biosynthetic process"/>
    <property type="evidence" value="ECO:0007669"/>
    <property type="project" value="TreeGrafter"/>
</dbReference>
<dbReference type="CDD" id="cd01672">
    <property type="entry name" value="TMPK"/>
    <property type="match status" value="1"/>
</dbReference>
<dbReference type="FunFam" id="3.40.50.300:FF:000321">
    <property type="entry name" value="Thymidylate kinase"/>
    <property type="match status" value="1"/>
</dbReference>
<dbReference type="Gene3D" id="3.40.50.300">
    <property type="entry name" value="P-loop containing nucleotide triphosphate hydrolases"/>
    <property type="match status" value="1"/>
</dbReference>
<dbReference type="HAMAP" id="MF_00165">
    <property type="entry name" value="Thymidylate_kinase"/>
    <property type="match status" value="1"/>
</dbReference>
<dbReference type="InterPro" id="IPR027417">
    <property type="entry name" value="P-loop_NTPase"/>
</dbReference>
<dbReference type="InterPro" id="IPR039430">
    <property type="entry name" value="Thymidylate_kin-like_dom"/>
</dbReference>
<dbReference type="InterPro" id="IPR018095">
    <property type="entry name" value="Thymidylate_kin_CS"/>
</dbReference>
<dbReference type="InterPro" id="IPR018094">
    <property type="entry name" value="Thymidylate_kinase"/>
</dbReference>
<dbReference type="NCBIfam" id="TIGR00041">
    <property type="entry name" value="DTMP_kinase"/>
    <property type="match status" value="1"/>
</dbReference>
<dbReference type="PANTHER" id="PTHR10344">
    <property type="entry name" value="THYMIDYLATE KINASE"/>
    <property type="match status" value="1"/>
</dbReference>
<dbReference type="PANTHER" id="PTHR10344:SF4">
    <property type="entry name" value="UMP-CMP KINASE 2, MITOCHONDRIAL"/>
    <property type="match status" value="1"/>
</dbReference>
<dbReference type="Pfam" id="PF02223">
    <property type="entry name" value="Thymidylate_kin"/>
    <property type="match status" value="1"/>
</dbReference>
<dbReference type="SUPFAM" id="SSF52540">
    <property type="entry name" value="P-loop containing nucleoside triphosphate hydrolases"/>
    <property type="match status" value="1"/>
</dbReference>
<dbReference type="PROSITE" id="PS01331">
    <property type="entry name" value="THYMIDYLATE_KINASE"/>
    <property type="match status" value="1"/>
</dbReference>
<feature type="chain" id="PRO_0000155371" description="Thymidylate kinase">
    <location>
        <begin position="1"/>
        <end position="212"/>
    </location>
</feature>
<feature type="binding site" evidence="1">
    <location>
        <begin position="11"/>
        <end position="18"/>
    </location>
    <ligand>
        <name>ATP</name>
        <dbReference type="ChEBI" id="CHEBI:30616"/>
    </ligand>
</feature>
<evidence type="ECO:0000255" key="1">
    <source>
        <dbReference type="HAMAP-Rule" id="MF_00165"/>
    </source>
</evidence>
<organism>
    <name type="scientific">Vibrio vulnificus (strain YJ016)</name>
    <dbReference type="NCBI Taxonomy" id="196600"/>
    <lineage>
        <taxon>Bacteria</taxon>
        <taxon>Pseudomonadati</taxon>
        <taxon>Pseudomonadota</taxon>
        <taxon>Gammaproteobacteria</taxon>
        <taxon>Vibrionales</taxon>
        <taxon>Vibrionaceae</taxon>
        <taxon>Vibrio</taxon>
    </lineage>
</organism>